<accession>B6ESA4</accession>
<organism>
    <name type="scientific">Aliivibrio salmonicida (strain LFI1238)</name>
    <name type="common">Vibrio salmonicida (strain LFI1238)</name>
    <dbReference type="NCBI Taxonomy" id="316275"/>
    <lineage>
        <taxon>Bacteria</taxon>
        <taxon>Pseudomonadati</taxon>
        <taxon>Pseudomonadota</taxon>
        <taxon>Gammaproteobacteria</taxon>
        <taxon>Vibrionales</taxon>
        <taxon>Vibrionaceae</taxon>
        <taxon>Aliivibrio</taxon>
    </lineage>
</organism>
<keyword id="KW-0963">Cytoplasm</keyword>
<keyword id="KW-0479">Metal-binding</keyword>
<keyword id="KW-0520">NAD</keyword>
<keyword id="KW-0560">Oxidoreductase</keyword>
<keyword id="KW-0862">Zinc</keyword>
<proteinExistence type="inferred from homology"/>
<name>TDH_ALISL</name>
<feature type="chain" id="PRO_1000130534" description="L-threonine 3-dehydrogenase">
    <location>
        <begin position="1"/>
        <end position="343"/>
    </location>
</feature>
<feature type="active site" description="Charge relay system" evidence="1">
    <location>
        <position position="42"/>
    </location>
</feature>
<feature type="active site" description="Charge relay system" evidence="1">
    <location>
        <position position="45"/>
    </location>
</feature>
<feature type="binding site" evidence="1">
    <location>
        <position position="40"/>
    </location>
    <ligand>
        <name>Zn(2+)</name>
        <dbReference type="ChEBI" id="CHEBI:29105"/>
        <label>1</label>
        <note>catalytic</note>
    </ligand>
</feature>
<feature type="binding site" evidence="1">
    <location>
        <position position="65"/>
    </location>
    <ligand>
        <name>Zn(2+)</name>
        <dbReference type="ChEBI" id="CHEBI:29105"/>
        <label>1</label>
        <note>catalytic</note>
    </ligand>
</feature>
<feature type="binding site" evidence="1">
    <location>
        <position position="66"/>
    </location>
    <ligand>
        <name>Zn(2+)</name>
        <dbReference type="ChEBI" id="CHEBI:29105"/>
        <label>1</label>
        <note>catalytic</note>
    </ligand>
</feature>
<feature type="binding site" evidence="1">
    <location>
        <position position="95"/>
    </location>
    <ligand>
        <name>Zn(2+)</name>
        <dbReference type="ChEBI" id="CHEBI:29105"/>
        <label>2</label>
    </ligand>
</feature>
<feature type="binding site" evidence="1">
    <location>
        <position position="98"/>
    </location>
    <ligand>
        <name>Zn(2+)</name>
        <dbReference type="ChEBI" id="CHEBI:29105"/>
        <label>2</label>
    </ligand>
</feature>
<feature type="binding site" evidence="1">
    <location>
        <position position="101"/>
    </location>
    <ligand>
        <name>Zn(2+)</name>
        <dbReference type="ChEBI" id="CHEBI:29105"/>
        <label>2</label>
    </ligand>
</feature>
<feature type="binding site" evidence="1">
    <location>
        <position position="109"/>
    </location>
    <ligand>
        <name>Zn(2+)</name>
        <dbReference type="ChEBI" id="CHEBI:29105"/>
        <label>2</label>
    </ligand>
</feature>
<feature type="binding site" evidence="1">
    <location>
        <position position="177"/>
    </location>
    <ligand>
        <name>NAD(+)</name>
        <dbReference type="ChEBI" id="CHEBI:57540"/>
    </ligand>
</feature>
<feature type="binding site" evidence="1">
    <location>
        <position position="197"/>
    </location>
    <ligand>
        <name>NAD(+)</name>
        <dbReference type="ChEBI" id="CHEBI:57540"/>
    </ligand>
</feature>
<feature type="binding site" evidence="1">
    <location>
        <position position="202"/>
    </location>
    <ligand>
        <name>NAD(+)</name>
        <dbReference type="ChEBI" id="CHEBI:57540"/>
    </ligand>
</feature>
<feature type="binding site" evidence="1">
    <location>
        <begin position="264"/>
        <end position="266"/>
    </location>
    <ligand>
        <name>NAD(+)</name>
        <dbReference type="ChEBI" id="CHEBI:57540"/>
    </ligand>
</feature>
<feature type="binding site" evidence="1">
    <location>
        <begin position="288"/>
        <end position="289"/>
    </location>
    <ligand>
        <name>NAD(+)</name>
        <dbReference type="ChEBI" id="CHEBI:57540"/>
    </ligand>
</feature>
<feature type="site" description="Important for catalytic activity for the proton relay mechanism but does not participate directly in the coordination of zinc atom" evidence="1">
    <location>
        <position position="150"/>
    </location>
</feature>
<sequence>MKIKALSKLKPEEGIWMTEVEKPEMGHNDILIRIKKTAICGTDVHIYNWDEWSQKTIPVPMVVGHEYVGEVVGIGQEVRGFEIGDRVSGEGHITCGHCRNCRGGRTHLCRNTTGVGVNRTGAFSEFLVIPAFNAFKIPAGISDDLASIFDPFGNAVHTALSFDLVGEDVLITGAGPIGIMAAAVAKHVGARHVVITDVNEFRLDLARKMGVTRAVNVMNEKLEDVMSDLGMTEGFDVGLEMSGNPSAFNSMLTNMNHGGKISLLGIPPSDMAVDWNQVIFKGLVIKGIYGREMFETWYKMASLIQSGLDLTPIITHHYKIDDFQAGFDMMRSGMSGKVILDWE</sequence>
<dbReference type="EC" id="1.1.1.103" evidence="1"/>
<dbReference type="EMBL" id="FM178380">
    <property type="protein sequence ID" value="CAQ81591.1"/>
    <property type="molecule type" value="Genomic_DNA"/>
</dbReference>
<dbReference type="RefSeq" id="WP_012552112.1">
    <property type="nucleotide sequence ID" value="NC_011313.1"/>
</dbReference>
<dbReference type="SMR" id="B6ESA4"/>
<dbReference type="KEGG" id="vsa:VSAL_II0837"/>
<dbReference type="eggNOG" id="COG1063">
    <property type="taxonomic scope" value="Bacteria"/>
</dbReference>
<dbReference type="HOGENOM" id="CLU_026673_11_0_6"/>
<dbReference type="UniPathway" id="UPA00046">
    <property type="reaction ID" value="UER00505"/>
</dbReference>
<dbReference type="Proteomes" id="UP000001730">
    <property type="component" value="Chromosome 2"/>
</dbReference>
<dbReference type="GO" id="GO:0005737">
    <property type="term" value="C:cytoplasm"/>
    <property type="evidence" value="ECO:0007669"/>
    <property type="project" value="UniProtKB-SubCell"/>
</dbReference>
<dbReference type="GO" id="GO:0008743">
    <property type="term" value="F:L-threonine 3-dehydrogenase activity"/>
    <property type="evidence" value="ECO:0007669"/>
    <property type="project" value="UniProtKB-UniRule"/>
</dbReference>
<dbReference type="GO" id="GO:0008270">
    <property type="term" value="F:zinc ion binding"/>
    <property type="evidence" value="ECO:0007669"/>
    <property type="project" value="UniProtKB-UniRule"/>
</dbReference>
<dbReference type="GO" id="GO:0019518">
    <property type="term" value="P:L-threonine catabolic process to glycine"/>
    <property type="evidence" value="ECO:0007669"/>
    <property type="project" value="UniProtKB-UniPathway"/>
</dbReference>
<dbReference type="Gene3D" id="3.90.180.10">
    <property type="entry name" value="Medium-chain alcohol dehydrogenases, catalytic domain"/>
    <property type="match status" value="1"/>
</dbReference>
<dbReference type="Gene3D" id="3.40.50.720">
    <property type="entry name" value="NAD(P)-binding Rossmann-like Domain"/>
    <property type="match status" value="1"/>
</dbReference>
<dbReference type="HAMAP" id="MF_00627">
    <property type="entry name" value="Thr_dehydrog"/>
    <property type="match status" value="1"/>
</dbReference>
<dbReference type="InterPro" id="IPR013149">
    <property type="entry name" value="ADH-like_C"/>
</dbReference>
<dbReference type="InterPro" id="IPR013154">
    <property type="entry name" value="ADH-like_N"/>
</dbReference>
<dbReference type="InterPro" id="IPR002328">
    <property type="entry name" value="ADH_Zn_CS"/>
</dbReference>
<dbReference type="InterPro" id="IPR011032">
    <property type="entry name" value="GroES-like_sf"/>
</dbReference>
<dbReference type="InterPro" id="IPR004627">
    <property type="entry name" value="L-Threonine_3-DHase"/>
</dbReference>
<dbReference type="InterPro" id="IPR036291">
    <property type="entry name" value="NAD(P)-bd_dom_sf"/>
</dbReference>
<dbReference type="InterPro" id="IPR020843">
    <property type="entry name" value="PKS_ER"/>
</dbReference>
<dbReference type="InterPro" id="IPR050129">
    <property type="entry name" value="Zn_alcohol_dh"/>
</dbReference>
<dbReference type="NCBIfam" id="NF003808">
    <property type="entry name" value="PRK05396.1"/>
    <property type="match status" value="1"/>
</dbReference>
<dbReference type="NCBIfam" id="TIGR00692">
    <property type="entry name" value="tdh"/>
    <property type="match status" value="1"/>
</dbReference>
<dbReference type="PANTHER" id="PTHR43401">
    <property type="entry name" value="L-THREONINE 3-DEHYDROGENASE"/>
    <property type="match status" value="1"/>
</dbReference>
<dbReference type="PANTHER" id="PTHR43401:SF2">
    <property type="entry name" value="L-THREONINE 3-DEHYDROGENASE"/>
    <property type="match status" value="1"/>
</dbReference>
<dbReference type="Pfam" id="PF08240">
    <property type="entry name" value="ADH_N"/>
    <property type="match status" value="1"/>
</dbReference>
<dbReference type="Pfam" id="PF00107">
    <property type="entry name" value="ADH_zinc_N"/>
    <property type="match status" value="1"/>
</dbReference>
<dbReference type="SMART" id="SM00829">
    <property type="entry name" value="PKS_ER"/>
    <property type="match status" value="1"/>
</dbReference>
<dbReference type="SUPFAM" id="SSF50129">
    <property type="entry name" value="GroES-like"/>
    <property type="match status" value="1"/>
</dbReference>
<dbReference type="SUPFAM" id="SSF51735">
    <property type="entry name" value="NAD(P)-binding Rossmann-fold domains"/>
    <property type="match status" value="1"/>
</dbReference>
<dbReference type="PROSITE" id="PS00059">
    <property type="entry name" value="ADH_ZINC"/>
    <property type="match status" value="1"/>
</dbReference>
<comment type="function">
    <text evidence="1">Catalyzes the NAD(+)-dependent oxidation of L-threonine to 2-amino-3-ketobutyrate.</text>
</comment>
<comment type="catalytic activity">
    <reaction evidence="1">
        <text>L-threonine + NAD(+) = (2S)-2-amino-3-oxobutanoate + NADH + H(+)</text>
        <dbReference type="Rhea" id="RHEA:13161"/>
        <dbReference type="ChEBI" id="CHEBI:15378"/>
        <dbReference type="ChEBI" id="CHEBI:57540"/>
        <dbReference type="ChEBI" id="CHEBI:57926"/>
        <dbReference type="ChEBI" id="CHEBI:57945"/>
        <dbReference type="ChEBI" id="CHEBI:78948"/>
        <dbReference type="EC" id="1.1.1.103"/>
    </reaction>
</comment>
<comment type="cofactor">
    <cofactor evidence="1">
        <name>Zn(2+)</name>
        <dbReference type="ChEBI" id="CHEBI:29105"/>
    </cofactor>
    <text evidence="1">Binds 2 Zn(2+) ions per subunit.</text>
</comment>
<comment type="pathway">
    <text evidence="1">Amino-acid degradation; L-threonine degradation via oxydo-reductase pathway; glycine from L-threonine: step 1/2.</text>
</comment>
<comment type="subunit">
    <text evidence="1">Homotetramer.</text>
</comment>
<comment type="subcellular location">
    <subcellularLocation>
        <location evidence="1">Cytoplasm</location>
    </subcellularLocation>
</comment>
<comment type="similarity">
    <text evidence="1">Belongs to the zinc-containing alcohol dehydrogenase family.</text>
</comment>
<evidence type="ECO:0000255" key="1">
    <source>
        <dbReference type="HAMAP-Rule" id="MF_00627"/>
    </source>
</evidence>
<reference key="1">
    <citation type="journal article" date="2008" name="BMC Genomics">
        <title>The genome sequence of the fish pathogen Aliivibrio salmonicida strain LFI1238 shows extensive evidence of gene decay.</title>
        <authorList>
            <person name="Hjerde E."/>
            <person name="Lorentzen M.S."/>
            <person name="Holden M.T."/>
            <person name="Seeger K."/>
            <person name="Paulsen S."/>
            <person name="Bason N."/>
            <person name="Churcher C."/>
            <person name="Harris D."/>
            <person name="Norbertczak H."/>
            <person name="Quail M.A."/>
            <person name="Sanders S."/>
            <person name="Thurston S."/>
            <person name="Parkhill J."/>
            <person name="Willassen N.P."/>
            <person name="Thomson N.R."/>
        </authorList>
    </citation>
    <scope>NUCLEOTIDE SEQUENCE [LARGE SCALE GENOMIC DNA]</scope>
    <source>
        <strain>LFI1238</strain>
    </source>
</reference>
<protein>
    <recommendedName>
        <fullName evidence="1">L-threonine 3-dehydrogenase</fullName>
        <shortName evidence="1">TDH</shortName>
        <ecNumber evidence="1">1.1.1.103</ecNumber>
    </recommendedName>
</protein>
<gene>
    <name evidence="1" type="primary">tdh</name>
    <name type="ordered locus">VSAL_II0837</name>
</gene>